<proteinExistence type="inferred from homology"/>
<organismHost>
    <name type="scientific">Aves</name>
    <dbReference type="NCBI Taxonomy" id="8782"/>
</organismHost>
<protein>
    <recommendedName>
        <fullName evidence="1">Protein PB1-F2</fullName>
    </recommendedName>
</protein>
<organism>
    <name type="scientific">Influenza A virus (strain A/Duck/Germany/1949 H10N7)</name>
    <dbReference type="NCBI Taxonomy" id="382838"/>
    <lineage>
        <taxon>Viruses</taxon>
        <taxon>Riboviria</taxon>
        <taxon>Orthornavirae</taxon>
        <taxon>Negarnaviricota</taxon>
        <taxon>Polyploviricotina</taxon>
        <taxon>Insthoviricetes</taxon>
        <taxon>Articulavirales</taxon>
        <taxon>Orthomyxoviridae</taxon>
        <taxon>Alphainfluenzavirus</taxon>
        <taxon>Alphainfluenzavirus influenzae</taxon>
        <taxon>Influenza A virus</taxon>
    </lineage>
</organism>
<gene>
    <name evidence="1" type="primary">PB1</name>
</gene>
<accession>Q0A439</accession>
<keyword id="KW-0053">Apoptosis</keyword>
<keyword id="KW-1035">Host cytoplasm</keyword>
<keyword id="KW-1043">Host membrane</keyword>
<keyword id="KW-1045">Host mitochondrion</keyword>
<keyword id="KW-1046">Host mitochondrion inner membrane</keyword>
<keyword id="KW-1048">Host nucleus</keyword>
<keyword id="KW-0945">Host-virus interaction</keyword>
<keyword id="KW-1090">Inhibition of host innate immune response by virus</keyword>
<keyword id="KW-1097">Inhibition of host MAVS by virus</keyword>
<keyword id="KW-1113">Inhibition of host RLR pathway by virus</keyword>
<keyword id="KW-0472">Membrane</keyword>
<keyword id="KW-1119">Modulation of host cell apoptosis by virus</keyword>
<keyword id="KW-0899">Viral immunoevasion</keyword>
<evidence type="ECO:0000255" key="1">
    <source>
        <dbReference type="HAMAP-Rule" id="MF_04064"/>
    </source>
</evidence>
<evidence type="ECO:0000256" key="2">
    <source>
        <dbReference type="SAM" id="MobiDB-lite"/>
    </source>
</evidence>
<feature type="chain" id="PRO_0000278708" description="Protein PB1-F2">
    <location>
        <begin position="1"/>
        <end position="90"/>
    </location>
</feature>
<feature type="region of interest" description="Disordered" evidence="2">
    <location>
        <begin position="1"/>
        <end position="34"/>
    </location>
</feature>
<feature type="region of interest" description="Mitochondrial targeting sequence" evidence="1">
    <location>
        <begin position="65"/>
        <end position="87"/>
    </location>
</feature>
<feature type="compositionally biased region" description="Polar residues" evidence="2">
    <location>
        <begin position="1"/>
        <end position="15"/>
    </location>
</feature>
<feature type="site" description="Low pathogenicity" evidence="1">
    <location>
        <position position="66"/>
    </location>
</feature>
<reference key="1">
    <citation type="journal article" date="2006" name="Science">
        <title>Large-scale sequence analysis of avian influenza isolates.</title>
        <authorList>
            <person name="Obenauer J.C."/>
            <person name="Denson J."/>
            <person name="Mehta P.K."/>
            <person name="Su X."/>
            <person name="Mukatira S."/>
            <person name="Finkelstein D.B."/>
            <person name="Xu X."/>
            <person name="Wang J."/>
            <person name="Ma J."/>
            <person name="Fan Y."/>
            <person name="Rakestraw K.M."/>
            <person name="Webster R.G."/>
            <person name="Hoffmann E."/>
            <person name="Krauss S."/>
            <person name="Zheng J."/>
            <person name="Zhang Z."/>
            <person name="Naeve C.W."/>
        </authorList>
    </citation>
    <scope>NUCLEOTIDE SEQUENCE [GENOMIC RNA]</scope>
</reference>
<name>PB1F2_I49A1</name>
<dbReference type="EMBL" id="CY014677">
    <property type="protein sequence ID" value="ABI84543.1"/>
    <property type="molecule type" value="Genomic_RNA"/>
</dbReference>
<dbReference type="SMR" id="Q0A439"/>
<dbReference type="Proteomes" id="UP000008217">
    <property type="component" value="Genome"/>
</dbReference>
<dbReference type="GO" id="GO:0044164">
    <property type="term" value="C:host cell cytosol"/>
    <property type="evidence" value="ECO:0007669"/>
    <property type="project" value="UniProtKB-SubCell"/>
</dbReference>
<dbReference type="GO" id="GO:0044192">
    <property type="term" value="C:host cell mitochondrial inner membrane"/>
    <property type="evidence" value="ECO:0007669"/>
    <property type="project" value="UniProtKB-SubCell"/>
</dbReference>
<dbReference type="GO" id="GO:0042025">
    <property type="term" value="C:host cell nucleus"/>
    <property type="evidence" value="ECO:0007669"/>
    <property type="project" value="UniProtKB-SubCell"/>
</dbReference>
<dbReference type="GO" id="GO:0016020">
    <property type="term" value="C:membrane"/>
    <property type="evidence" value="ECO:0007669"/>
    <property type="project" value="UniProtKB-UniRule"/>
</dbReference>
<dbReference type="GO" id="GO:0052150">
    <property type="term" value="P:symbiont-mediated perturbation of host apoptosis"/>
    <property type="evidence" value="ECO:0007669"/>
    <property type="project" value="UniProtKB-KW"/>
</dbReference>
<dbReference type="GO" id="GO:0039545">
    <property type="term" value="P:symbiont-mediated suppression of host cytoplasmic pattern recognition receptor signaling pathway via inhibition of MAVS activity"/>
    <property type="evidence" value="ECO:0007669"/>
    <property type="project" value="UniProtKB-KW"/>
</dbReference>
<dbReference type="HAMAP" id="MF_04064">
    <property type="entry name" value="INFV_PB1F2"/>
    <property type="match status" value="1"/>
</dbReference>
<dbReference type="InterPro" id="IPR021045">
    <property type="entry name" value="Flu_proapoptotic_PB1-F2"/>
</dbReference>
<dbReference type="Pfam" id="PF11986">
    <property type="entry name" value="PB1-F2"/>
    <property type="match status" value="1"/>
</dbReference>
<sequence length="90" mass="10917">MEQEQDTPWTQSTEHINTRKRGSGQQTQKLERPNSIQLMDHCLRTMNQVDMHKRTASWKQWLSLKNPTPESLKIRVLKRWKLFNKQEWTN</sequence>
<comment type="function">
    <text evidence="1">Plays an important role in promoting lung pathology in both primary viral infection and secondary bacterial infection. Promotes alteration of mitochondrial morphology, dissipation of mitochondrial membrane potential, and cell death. Alternatively, inhibits the production of interferon in the infected cell at the level of host mitochondrial antiviral signaling MAVS. Its level of expression differs greatly depending on which cell type is infected, in a manner that is independent of the levels of expression of other viral proteins. Monocytic cells are more affected than epithelial cells. Seems to disable virus-infected monocytes or other host innate immune cells. During early stage of infection, predisposes the mitochondria to permeability transition through interaction with host SLC25A6/ANT3 and VDAC1. These proteins participate in the formation of the permeability transition pore complex (PTPC) responsible of the release of mitochondrial products that triggers apoptosis.</text>
</comment>
<comment type="subunit">
    <text evidence="1">Oligomer. Interacts with human SLC25A6/ANT3 and VDAC1. Interacts with host MAVS.</text>
</comment>
<comment type="subcellular location">
    <subcellularLocation>
        <location evidence="1">Host mitochondrion inner membrane</location>
    </subcellularLocation>
    <subcellularLocation>
        <location evidence="1">Host nucleus</location>
    </subcellularLocation>
    <subcellularLocation>
        <location evidence="1">Host cytoplasm</location>
        <location evidence="1">Host cytosol</location>
    </subcellularLocation>
    <text evidence="1">Inner mitochondrial membrane in most cells types. Otherwise is detected in the nucleus and cytosol.</text>
</comment>
<comment type="miscellaneous">
    <text>Is not encoded in all strains, and seems to be dispensable for replication.</text>
</comment>
<comment type="similarity">
    <text evidence="1">Belongs to the influenza viruses PB1-F2 family.</text>
</comment>